<gene>
    <name evidence="1" type="primary">cysH</name>
    <name type="ordered locus">EcE24377A_3064</name>
</gene>
<evidence type="ECO:0000255" key="1">
    <source>
        <dbReference type="HAMAP-Rule" id="MF_00063"/>
    </source>
</evidence>
<reference key="1">
    <citation type="journal article" date="2008" name="J. Bacteriol.">
        <title>The pangenome structure of Escherichia coli: comparative genomic analysis of E. coli commensal and pathogenic isolates.</title>
        <authorList>
            <person name="Rasko D.A."/>
            <person name="Rosovitz M.J."/>
            <person name="Myers G.S.A."/>
            <person name="Mongodin E.F."/>
            <person name="Fricke W.F."/>
            <person name="Gajer P."/>
            <person name="Crabtree J."/>
            <person name="Sebaihia M."/>
            <person name="Thomson N.R."/>
            <person name="Chaudhuri R."/>
            <person name="Henderson I.R."/>
            <person name="Sperandio V."/>
            <person name="Ravel J."/>
        </authorList>
    </citation>
    <scope>NUCLEOTIDE SEQUENCE [LARGE SCALE GENOMIC DNA]</scope>
    <source>
        <strain>E24377A / ETEC</strain>
    </source>
</reference>
<organism>
    <name type="scientific">Escherichia coli O139:H28 (strain E24377A / ETEC)</name>
    <dbReference type="NCBI Taxonomy" id="331111"/>
    <lineage>
        <taxon>Bacteria</taxon>
        <taxon>Pseudomonadati</taxon>
        <taxon>Pseudomonadota</taxon>
        <taxon>Gammaproteobacteria</taxon>
        <taxon>Enterobacterales</taxon>
        <taxon>Enterobacteriaceae</taxon>
        <taxon>Escherichia</taxon>
    </lineage>
</organism>
<protein>
    <recommendedName>
        <fullName evidence="1">Phosphoadenosine 5'-phosphosulfate reductase</fullName>
        <shortName evidence="1">PAPS reductase</shortName>
        <ecNumber evidence="1">1.8.4.8</ecNumber>
    </recommendedName>
    <alternativeName>
        <fullName evidence="1">3'-phosphoadenylylsulfate reductase</fullName>
    </alternativeName>
    <alternativeName>
        <fullName evidence="1">PAPS reductase, thioredoxin dependent</fullName>
    </alternativeName>
    <alternativeName>
        <fullName evidence="1">PAPS sulfotransferase</fullName>
    </alternativeName>
    <alternativeName>
        <fullName evidence="1">PAdoPS reductase</fullName>
    </alternativeName>
</protein>
<comment type="function">
    <text evidence="1">Catalyzes the formation of sulfite from phosphoadenosine 5'-phosphosulfate (PAPS) using thioredoxin as an electron donor.</text>
</comment>
<comment type="catalytic activity">
    <reaction evidence="1">
        <text>[thioredoxin]-disulfide + sulfite + adenosine 3',5'-bisphosphate + 2 H(+) = [thioredoxin]-dithiol + 3'-phosphoadenylyl sulfate</text>
        <dbReference type="Rhea" id="RHEA:11724"/>
        <dbReference type="Rhea" id="RHEA-COMP:10698"/>
        <dbReference type="Rhea" id="RHEA-COMP:10700"/>
        <dbReference type="ChEBI" id="CHEBI:15378"/>
        <dbReference type="ChEBI" id="CHEBI:17359"/>
        <dbReference type="ChEBI" id="CHEBI:29950"/>
        <dbReference type="ChEBI" id="CHEBI:50058"/>
        <dbReference type="ChEBI" id="CHEBI:58339"/>
        <dbReference type="ChEBI" id="CHEBI:58343"/>
        <dbReference type="EC" id="1.8.4.8"/>
    </reaction>
</comment>
<comment type="pathway">
    <text evidence="1">Sulfur metabolism; hydrogen sulfide biosynthesis; sulfite from sulfate: step 3/3.</text>
</comment>
<comment type="subcellular location">
    <subcellularLocation>
        <location evidence="1">Cytoplasm</location>
    </subcellularLocation>
</comment>
<comment type="similarity">
    <text evidence="1">Belongs to the PAPS reductase family. CysH subfamily.</text>
</comment>
<feature type="chain" id="PRO_1000057430" description="Phosphoadenosine 5'-phosphosulfate reductase">
    <location>
        <begin position="1"/>
        <end position="244"/>
    </location>
</feature>
<feature type="active site" description="Nucleophile; cysteine thiosulfonate intermediate" evidence="1">
    <location>
        <position position="239"/>
    </location>
</feature>
<keyword id="KW-0963">Cytoplasm</keyword>
<keyword id="KW-0560">Oxidoreductase</keyword>
<keyword id="KW-1185">Reference proteome</keyword>
<sequence length="244" mass="27973">MSKLDLNALNELPKVDRILALAETNAELEKLDAEGRVAWALDNLPGEYVLSSSFGIQAAVSLHLVNQIHPDIPVILTDTGYLFPETYRFIDELTDKLKLNLKVYRATESAAWQEARYGKLWEQGVEGIEKYNDINKVEPMNRALKELNAQTWFAGLRREQSGSRANLPVLAIQRGVFKVLPIIDWDNRTIYQYLQKHGLKYHPLWDEGYLSVGDTHTTRKWEPGMSEEETRFFGLKRECGLHEG</sequence>
<proteinExistence type="inferred from homology"/>
<dbReference type="EC" id="1.8.4.8" evidence="1"/>
<dbReference type="EMBL" id="CP000800">
    <property type="protein sequence ID" value="ABV17378.1"/>
    <property type="molecule type" value="Genomic_DNA"/>
</dbReference>
<dbReference type="RefSeq" id="WP_000039843.1">
    <property type="nucleotide sequence ID" value="NC_009801.1"/>
</dbReference>
<dbReference type="SMR" id="A7ZQK5"/>
<dbReference type="GeneID" id="75205594"/>
<dbReference type="KEGG" id="ecw:EcE24377A_3064"/>
<dbReference type="HOGENOM" id="CLU_044089_3_0_6"/>
<dbReference type="UniPathway" id="UPA00140">
    <property type="reaction ID" value="UER00206"/>
</dbReference>
<dbReference type="Proteomes" id="UP000001122">
    <property type="component" value="Chromosome"/>
</dbReference>
<dbReference type="GO" id="GO:0005737">
    <property type="term" value="C:cytoplasm"/>
    <property type="evidence" value="ECO:0007669"/>
    <property type="project" value="UniProtKB-SubCell"/>
</dbReference>
<dbReference type="GO" id="GO:0004604">
    <property type="term" value="F:phosphoadenylyl-sulfate reductase (thioredoxin) activity"/>
    <property type="evidence" value="ECO:0007669"/>
    <property type="project" value="UniProtKB-UniRule"/>
</dbReference>
<dbReference type="GO" id="GO:0070814">
    <property type="term" value="P:hydrogen sulfide biosynthetic process"/>
    <property type="evidence" value="ECO:0007669"/>
    <property type="project" value="UniProtKB-UniRule"/>
</dbReference>
<dbReference type="GO" id="GO:0019379">
    <property type="term" value="P:sulfate assimilation, phosphoadenylyl sulfate reduction by phosphoadenylyl-sulfate reductase (thioredoxin)"/>
    <property type="evidence" value="ECO:0007669"/>
    <property type="project" value="UniProtKB-UniRule"/>
</dbReference>
<dbReference type="CDD" id="cd23945">
    <property type="entry name" value="PAPS_reductase"/>
    <property type="match status" value="1"/>
</dbReference>
<dbReference type="FunFam" id="3.40.50.620:FF:000043">
    <property type="entry name" value="Phosphoadenosine phosphosulfate reductase"/>
    <property type="match status" value="1"/>
</dbReference>
<dbReference type="Gene3D" id="3.40.50.620">
    <property type="entry name" value="HUPs"/>
    <property type="match status" value="1"/>
</dbReference>
<dbReference type="HAMAP" id="MF_00063">
    <property type="entry name" value="CysH"/>
    <property type="match status" value="1"/>
</dbReference>
<dbReference type="InterPro" id="IPR004511">
    <property type="entry name" value="PAPS/APS_Rdtase"/>
</dbReference>
<dbReference type="InterPro" id="IPR002500">
    <property type="entry name" value="PAPS_reduct_dom"/>
</dbReference>
<dbReference type="InterPro" id="IPR011800">
    <property type="entry name" value="PAPS_reductase_CysH"/>
</dbReference>
<dbReference type="InterPro" id="IPR014729">
    <property type="entry name" value="Rossmann-like_a/b/a_fold"/>
</dbReference>
<dbReference type="NCBIfam" id="TIGR00434">
    <property type="entry name" value="cysH"/>
    <property type="match status" value="1"/>
</dbReference>
<dbReference type="NCBIfam" id="TIGR02057">
    <property type="entry name" value="PAPS_reductase"/>
    <property type="match status" value="1"/>
</dbReference>
<dbReference type="NCBIfam" id="NF002537">
    <property type="entry name" value="PRK02090.1"/>
    <property type="match status" value="1"/>
</dbReference>
<dbReference type="PANTHER" id="PTHR46509">
    <property type="entry name" value="PHOSPHOADENOSINE PHOSPHOSULFATE REDUCTASE"/>
    <property type="match status" value="1"/>
</dbReference>
<dbReference type="PANTHER" id="PTHR46509:SF1">
    <property type="entry name" value="PHOSPHOADENOSINE PHOSPHOSULFATE REDUCTASE"/>
    <property type="match status" value="1"/>
</dbReference>
<dbReference type="Pfam" id="PF01507">
    <property type="entry name" value="PAPS_reduct"/>
    <property type="match status" value="1"/>
</dbReference>
<dbReference type="PIRSF" id="PIRSF000857">
    <property type="entry name" value="PAPS_reductase"/>
    <property type="match status" value="1"/>
</dbReference>
<dbReference type="SUPFAM" id="SSF52402">
    <property type="entry name" value="Adenine nucleotide alpha hydrolases-like"/>
    <property type="match status" value="1"/>
</dbReference>
<name>CYSH_ECO24</name>
<accession>A7ZQK5</accession>